<protein>
    <recommendedName>
        <fullName evidence="5">Raniseptin-2</fullName>
        <shortName evidence="5">Rsp-2</shortName>
    </recommendedName>
</protein>
<organism>
    <name type="scientific">Boana raniceps</name>
    <name type="common">Chaco tree frog</name>
    <name type="synonym">Hyla roeschmanni</name>
    <dbReference type="NCBI Taxonomy" id="192750"/>
    <lineage>
        <taxon>Eukaryota</taxon>
        <taxon>Metazoa</taxon>
        <taxon>Chordata</taxon>
        <taxon>Craniata</taxon>
        <taxon>Vertebrata</taxon>
        <taxon>Euteleostomi</taxon>
        <taxon>Amphibia</taxon>
        <taxon>Batrachia</taxon>
        <taxon>Anura</taxon>
        <taxon>Neobatrachia</taxon>
        <taxon>Hyloidea</taxon>
        <taxon>Hylidae</taxon>
        <taxon>Hylinae</taxon>
        <taxon>Cophomantini</taxon>
        <taxon>Boana</taxon>
    </lineage>
</organism>
<proteinExistence type="inferred from homology"/>
<feature type="signal peptide" evidence="2">
    <location>
        <begin position="1"/>
        <end position="22"/>
    </location>
</feature>
<feature type="propeptide" id="PRO_0000371439" evidence="1">
    <location>
        <begin position="23"/>
        <end position="49"/>
    </location>
</feature>
<feature type="peptide" id="PRO_0000371440" description="Raniseptin-2" evidence="1">
    <location>
        <begin position="52"/>
        <end position="80"/>
    </location>
</feature>
<feature type="region of interest" description="Disordered" evidence="3">
    <location>
        <begin position="27"/>
        <end position="46"/>
    </location>
</feature>
<feature type="compositionally biased region" description="Acidic residues" evidence="3">
    <location>
        <begin position="30"/>
        <end position="44"/>
    </location>
</feature>
<comment type="function">
    <text evidence="1">Has antibacterial activity.</text>
</comment>
<comment type="subcellular location">
    <subcellularLocation>
        <location evidence="6">Secreted</location>
    </subcellularLocation>
</comment>
<comment type="tissue specificity">
    <text evidence="6">Expressed by the skin glands.</text>
</comment>
<comment type="similarity">
    <text evidence="2">Belongs to the frog skin active peptide (FSAP) family. Dermaseptin subfamily.</text>
</comment>
<dbReference type="GO" id="GO:0005576">
    <property type="term" value="C:extracellular region"/>
    <property type="evidence" value="ECO:0007669"/>
    <property type="project" value="UniProtKB-SubCell"/>
</dbReference>
<dbReference type="GO" id="GO:0042742">
    <property type="term" value="P:defense response to bacterium"/>
    <property type="evidence" value="ECO:0007669"/>
    <property type="project" value="UniProtKB-KW"/>
</dbReference>
<dbReference type="InterPro" id="IPR004275">
    <property type="entry name" value="Frog_antimicrobial_propeptide"/>
</dbReference>
<dbReference type="Pfam" id="PF03032">
    <property type="entry name" value="FSAP_sig_propep"/>
    <property type="match status" value="1"/>
</dbReference>
<name>RNSP2_BOARA</name>
<evidence type="ECO:0000250" key="1">
    <source>
        <dbReference type="UniProtKB" id="P86037"/>
    </source>
</evidence>
<evidence type="ECO:0000255" key="2"/>
<evidence type="ECO:0000256" key="3">
    <source>
        <dbReference type="SAM" id="MobiDB-lite"/>
    </source>
</evidence>
<evidence type="ECO:0000269" key="4">
    <source>
    </source>
</evidence>
<evidence type="ECO:0000303" key="5">
    <source>
    </source>
</evidence>
<evidence type="ECO:0000305" key="6"/>
<sequence>MAFLKKSLFLVLFLGIVSLSICEEEKRVGEEEEKQEEENEELSEEELRERRAWLDKLKSLGKVVGKVAIGVAQHYLNPQQ</sequence>
<reference evidence="6" key="1">
    <citation type="journal article" date="2008" name="Biochem. Biophys. Res. Commun.">
        <title>Post-secretory events alter the peptide content of the skin secretion of Hypsiboas raniceps.</title>
        <authorList>
            <person name="Magalhaes B.S."/>
            <person name="Melo J.A.T."/>
            <person name="Leite J.R.S.A."/>
            <person name="Silva L.P."/>
            <person name="Prates M.V."/>
            <person name="Vinecky F."/>
            <person name="Barbosa E.A."/>
            <person name="Verly R.M."/>
            <person name="Mehta A."/>
            <person name="Nicoli J.R."/>
            <person name="Bemquerer M.P."/>
            <person name="Andrade A.C."/>
            <person name="Bloch C. Jr."/>
        </authorList>
    </citation>
    <scope>NUCLEOTIDE SEQUENCE [MRNA]</scope>
    <source>
        <tissue evidence="4">Skin</tissue>
    </source>
</reference>
<accession>P86185</accession>
<keyword id="KW-0878">Amphibian defense peptide</keyword>
<keyword id="KW-0044">Antibiotic</keyword>
<keyword id="KW-0929">Antimicrobial</keyword>
<keyword id="KW-0165">Cleavage on pair of basic residues</keyword>
<keyword id="KW-0964">Secreted</keyword>
<keyword id="KW-0732">Signal</keyword>